<name>RRAGC_MOUSE</name>
<accession>Q99K70</accession>
<accession>A2A7K7</accession>
<accession>Q3TL69</accession>
<accession>Q6IQZ6</accession>
<accession>Q8CFT7</accession>
<accession>Q9Z124</accession>
<proteinExistence type="evidence at protein level"/>
<dbReference type="EC" id="3.6.5.-" evidence="1"/>
<dbReference type="EMBL" id="AB017616">
    <property type="protein sequence ID" value="BAA75671.1"/>
    <property type="status" value="ALT_FRAME"/>
    <property type="molecule type" value="mRNA"/>
</dbReference>
<dbReference type="EMBL" id="AK159355">
    <property type="protein sequence ID" value="BAE35013.1"/>
    <property type="molecule type" value="mRNA"/>
</dbReference>
<dbReference type="EMBL" id="AK166658">
    <property type="protein sequence ID" value="BAE38923.1"/>
    <property type="molecule type" value="mRNA"/>
</dbReference>
<dbReference type="EMBL" id="AL606962">
    <property type="status" value="NOT_ANNOTATED_CDS"/>
    <property type="molecule type" value="Genomic_DNA"/>
</dbReference>
<dbReference type="EMBL" id="BC005417">
    <property type="protein sequence ID" value="AAH05417.1"/>
    <property type="molecule type" value="mRNA"/>
</dbReference>
<dbReference type="EMBL" id="BC037732">
    <property type="status" value="NOT_ANNOTATED_CDS"/>
    <property type="molecule type" value="mRNA"/>
</dbReference>
<dbReference type="EMBL" id="BC071245">
    <property type="protein sequence ID" value="AAH71245.1"/>
    <property type="molecule type" value="mRNA"/>
</dbReference>
<dbReference type="CCDS" id="CCDS18622.1">
    <molecule id="Q99K70-1"/>
</dbReference>
<dbReference type="RefSeq" id="NP_059503.2">
    <molecule id="Q99K70-1"/>
    <property type="nucleotide sequence ID" value="NM_017475.2"/>
</dbReference>
<dbReference type="PDB" id="5X6V">
    <property type="method" value="X-ray"/>
    <property type="resolution" value="2.02 A"/>
    <property type="chains" value="G=238-375"/>
</dbReference>
<dbReference type="PDBsum" id="5X6V"/>
<dbReference type="SMR" id="Q99K70"/>
<dbReference type="BioGRID" id="207590">
    <property type="interactions" value="11"/>
</dbReference>
<dbReference type="FunCoup" id="Q99K70">
    <property type="interactions" value="4598"/>
</dbReference>
<dbReference type="STRING" id="10090.ENSMUSP00000030399"/>
<dbReference type="GlyGen" id="Q99K70">
    <property type="glycosylation" value="3 sites, 2 N-linked glycans (2 sites), 1 O-linked glycan (1 site)"/>
</dbReference>
<dbReference type="iPTMnet" id="Q99K70"/>
<dbReference type="PhosphoSitePlus" id="Q99K70"/>
<dbReference type="SwissPalm" id="Q99K70"/>
<dbReference type="jPOST" id="Q99K70"/>
<dbReference type="PaxDb" id="10090-ENSMUSP00000030399"/>
<dbReference type="PeptideAtlas" id="Q99K70"/>
<dbReference type="ProteomicsDB" id="260936">
    <molecule id="Q99K70-1"/>
</dbReference>
<dbReference type="ProteomicsDB" id="260937">
    <molecule id="Q99K70-2"/>
</dbReference>
<dbReference type="Pumba" id="Q99K70"/>
<dbReference type="Antibodypedia" id="17665">
    <property type="antibodies" value="279 antibodies from 29 providers"/>
</dbReference>
<dbReference type="DNASU" id="54170"/>
<dbReference type="Ensembl" id="ENSMUST00000030399.7">
    <molecule id="Q99K70-1"/>
    <property type="protein sequence ID" value="ENSMUSP00000030399.7"/>
    <property type="gene ID" value="ENSMUSG00000028646.17"/>
</dbReference>
<dbReference type="Ensembl" id="ENSMUST00000155757.8">
    <molecule id="Q99K70-2"/>
    <property type="protein sequence ID" value="ENSMUSP00000115232.2"/>
    <property type="gene ID" value="ENSMUSG00000028646.17"/>
</dbReference>
<dbReference type="GeneID" id="54170"/>
<dbReference type="KEGG" id="mmu:54170"/>
<dbReference type="UCSC" id="uc008uqm.1">
    <molecule id="Q99K70-1"/>
    <property type="organism name" value="mouse"/>
</dbReference>
<dbReference type="AGR" id="MGI:1858751"/>
<dbReference type="CTD" id="64121"/>
<dbReference type="MGI" id="MGI:1858751">
    <property type="gene designation" value="Rragc"/>
</dbReference>
<dbReference type="VEuPathDB" id="HostDB:ENSMUSG00000028646"/>
<dbReference type="eggNOG" id="KOG3887">
    <property type="taxonomic scope" value="Eukaryota"/>
</dbReference>
<dbReference type="GeneTree" id="ENSGT00950000183031"/>
<dbReference type="HOGENOM" id="CLU_047421_1_1_1"/>
<dbReference type="InParanoid" id="Q99K70"/>
<dbReference type="OMA" id="NCRTFQE"/>
<dbReference type="OrthoDB" id="26136at2759"/>
<dbReference type="PhylomeDB" id="Q99K70"/>
<dbReference type="TreeFam" id="TF300659"/>
<dbReference type="Reactome" id="R-MMU-1632852">
    <property type="pathway name" value="Macroautophagy"/>
</dbReference>
<dbReference type="Reactome" id="R-MMU-165159">
    <property type="pathway name" value="MTOR signalling"/>
</dbReference>
<dbReference type="Reactome" id="R-MMU-166208">
    <property type="pathway name" value="mTORC1-mediated signalling"/>
</dbReference>
<dbReference type="Reactome" id="R-MMU-380972">
    <property type="pathway name" value="Energy dependent regulation of mTOR by LKB1-AMPK"/>
</dbReference>
<dbReference type="Reactome" id="R-MMU-5628897">
    <property type="pathway name" value="TP53 Regulates Metabolic Genes"/>
</dbReference>
<dbReference type="Reactome" id="R-MMU-8943724">
    <property type="pathway name" value="Regulation of PTEN gene transcription"/>
</dbReference>
<dbReference type="Reactome" id="R-MMU-9639288">
    <property type="pathway name" value="Amino acids regulate mTORC1"/>
</dbReference>
<dbReference type="BioGRID-ORCS" id="54170">
    <property type="hits" value="27 hits in 80 CRISPR screens"/>
</dbReference>
<dbReference type="ChiTaRS" id="Rragc">
    <property type="organism name" value="mouse"/>
</dbReference>
<dbReference type="PRO" id="PR:Q99K70"/>
<dbReference type="Proteomes" id="UP000000589">
    <property type="component" value="Chromosome 4"/>
</dbReference>
<dbReference type="RNAct" id="Q99K70">
    <property type="molecule type" value="protein"/>
</dbReference>
<dbReference type="Bgee" id="ENSMUSG00000028646">
    <property type="expression patterns" value="Expressed in secondary oocyte and 264 other cell types or tissues"/>
</dbReference>
<dbReference type="GO" id="GO:0005737">
    <property type="term" value="C:cytoplasm"/>
    <property type="evidence" value="ECO:0000250"/>
    <property type="project" value="HGNC"/>
</dbReference>
<dbReference type="GO" id="GO:1990877">
    <property type="term" value="C:FNIP-folliculin RagC/D GAP"/>
    <property type="evidence" value="ECO:0007669"/>
    <property type="project" value="Ensembl"/>
</dbReference>
<dbReference type="GO" id="GO:0005765">
    <property type="term" value="C:lysosomal membrane"/>
    <property type="evidence" value="ECO:0000250"/>
    <property type="project" value="UniProtKB"/>
</dbReference>
<dbReference type="GO" id="GO:0005764">
    <property type="term" value="C:lysosome"/>
    <property type="evidence" value="ECO:0000250"/>
    <property type="project" value="UniProtKB"/>
</dbReference>
<dbReference type="GO" id="GO:0005654">
    <property type="term" value="C:nucleoplasm"/>
    <property type="evidence" value="ECO:0007669"/>
    <property type="project" value="Ensembl"/>
</dbReference>
<dbReference type="GO" id="GO:0005634">
    <property type="term" value="C:nucleus"/>
    <property type="evidence" value="ECO:0000250"/>
    <property type="project" value="HGNC"/>
</dbReference>
<dbReference type="GO" id="GO:0140767">
    <property type="term" value="F:enzyme-substrate adaptor activity"/>
    <property type="evidence" value="ECO:0007669"/>
    <property type="project" value="Ensembl"/>
</dbReference>
<dbReference type="GO" id="GO:0019003">
    <property type="term" value="F:GDP binding"/>
    <property type="evidence" value="ECO:0000250"/>
    <property type="project" value="UniProtKB"/>
</dbReference>
<dbReference type="GO" id="GO:0005525">
    <property type="term" value="F:GTP binding"/>
    <property type="evidence" value="ECO:0000250"/>
    <property type="project" value="HGNC"/>
</dbReference>
<dbReference type="GO" id="GO:0003924">
    <property type="term" value="F:GTPase activity"/>
    <property type="evidence" value="ECO:0000250"/>
    <property type="project" value="UniProtKB"/>
</dbReference>
<dbReference type="GO" id="GO:0051020">
    <property type="term" value="F:GTPase binding"/>
    <property type="evidence" value="ECO:0007669"/>
    <property type="project" value="Ensembl"/>
</dbReference>
<dbReference type="GO" id="GO:0060090">
    <property type="term" value="F:molecular adaptor activity"/>
    <property type="evidence" value="ECO:0000250"/>
    <property type="project" value="UniProtKB"/>
</dbReference>
<dbReference type="GO" id="GO:0046982">
    <property type="term" value="F:protein heterodimerization activity"/>
    <property type="evidence" value="ECO:0000250"/>
    <property type="project" value="UniProtKB"/>
</dbReference>
<dbReference type="GO" id="GO:0043495">
    <property type="term" value="F:protein-membrane adaptor activity"/>
    <property type="evidence" value="ECO:0000250"/>
    <property type="project" value="UniProtKB"/>
</dbReference>
<dbReference type="GO" id="GO:0034198">
    <property type="term" value="P:cellular response to amino acid starvation"/>
    <property type="evidence" value="ECO:0007669"/>
    <property type="project" value="Ensembl"/>
</dbReference>
<dbReference type="GO" id="GO:0032008">
    <property type="term" value="P:positive regulation of TOR signaling"/>
    <property type="evidence" value="ECO:0000250"/>
    <property type="project" value="UniProtKB"/>
</dbReference>
<dbReference type="GO" id="GO:1904263">
    <property type="term" value="P:positive regulation of TORC1 signaling"/>
    <property type="evidence" value="ECO:0000250"/>
    <property type="project" value="UniProtKB"/>
</dbReference>
<dbReference type="GO" id="GO:0061462">
    <property type="term" value="P:protein localization to lysosome"/>
    <property type="evidence" value="ECO:0007669"/>
    <property type="project" value="Ensembl"/>
</dbReference>
<dbReference type="GO" id="GO:0072657">
    <property type="term" value="P:protein localization to membrane"/>
    <property type="evidence" value="ECO:0000250"/>
    <property type="project" value="UniProtKB"/>
</dbReference>
<dbReference type="GO" id="GO:0043200">
    <property type="term" value="P:response to amino acid"/>
    <property type="evidence" value="ECO:0007669"/>
    <property type="project" value="Ensembl"/>
</dbReference>
<dbReference type="CDD" id="cd11385">
    <property type="entry name" value="RagC_like"/>
    <property type="match status" value="1"/>
</dbReference>
<dbReference type="FunFam" id="3.30.450.190:FF:000001">
    <property type="entry name" value="Ras-related GTP-binding protein C"/>
    <property type="match status" value="1"/>
</dbReference>
<dbReference type="FunFam" id="3.40.50.300:FF:000226">
    <property type="entry name" value="Ras-related GTP-binding protein D"/>
    <property type="match status" value="1"/>
</dbReference>
<dbReference type="Gene3D" id="3.30.450.190">
    <property type="match status" value="1"/>
</dbReference>
<dbReference type="Gene3D" id="3.40.50.300">
    <property type="entry name" value="P-loop containing nucleotide triphosphate hydrolases"/>
    <property type="match status" value="1"/>
</dbReference>
<dbReference type="InterPro" id="IPR006762">
    <property type="entry name" value="Gtr1_RagA"/>
</dbReference>
<dbReference type="InterPro" id="IPR027417">
    <property type="entry name" value="P-loop_NTPase"/>
</dbReference>
<dbReference type="InterPro" id="IPR039400">
    <property type="entry name" value="RagC/D"/>
</dbReference>
<dbReference type="PANTHER" id="PTHR11259">
    <property type="entry name" value="RAS-RELATED GTP BINDING RAG/GTR YEAST"/>
    <property type="match status" value="1"/>
</dbReference>
<dbReference type="PANTHER" id="PTHR11259:SF6">
    <property type="entry name" value="RAS-RELATED GTP-BINDING PROTEIN C"/>
    <property type="match status" value="1"/>
</dbReference>
<dbReference type="Pfam" id="PF04670">
    <property type="entry name" value="Gtr1_RagA"/>
    <property type="match status" value="1"/>
</dbReference>
<dbReference type="SUPFAM" id="SSF52540">
    <property type="entry name" value="P-loop containing nucleoside triphosphate hydrolases"/>
    <property type="match status" value="1"/>
</dbReference>
<gene>
    <name evidence="15" type="primary">Rragc</name>
</gene>
<evidence type="ECO:0000250" key="1">
    <source>
        <dbReference type="UniProtKB" id="Q9HB90"/>
    </source>
</evidence>
<evidence type="ECO:0000256" key="2">
    <source>
        <dbReference type="SAM" id="MobiDB-lite"/>
    </source>
</evidence>
<evidence type="ECO:0000269" key="3">
    <source>
    </source>
</evidence>
<evidence type="ECO:0000269" key="4">
    <source>
    </source>
</evidence>
<evidence type="ECO:0000269" key="5">
    <source>
    </source>
</evidence>
<evidence type="ECO:0000269" key="6">
    <source>
    </source>
</evidence>
<evidence type="ECO:0000303" key="7">
    <source>
    </source>
</evidence>
<evidence type="ECO:0000303" key="8">
    <source>
    </source>
</evidence>
<evidence type="ECO:0000305" key="9"/>
<evidence type="ECO:0000312" key="10">
    <source>
        <dbReference type="EMBL" id="AAH05417.1"/>
    </source>
</evidence>
<evidence type="ECO:0000312" key="11">
    <source>
        <dbReference type="EMBL" id="AAH71245.1"/>
    </source>
</evidence>
<evidence type="ECO:0000312" key="12">
    <source>
        <dbReference type="EMBL" id="BAA75671.1"/>
    </source>
</evidence>
<evidence type="ECO:0000312" key="13">
    <source>
        <dbReference type="EMBL" id="BAE35013.1"/>
    </source>
</evidence>
<evidence type="ECO:0000312" key="14">
    <source>
        <dbReference type="EMBL" id="BAE38923.1"/>
    </source>
</evidence>
<evidence type="ECO:0000312" key="15">
    <source>
        <dbReference type="MGI" id="MGI:1858751"/>
    </source>
</evidence>
<evidence type="ECO:0007744" key="16">
    <source>
        <dbReference type="PDB" id="5X6V"/>
    </source>
</evidence>
<evidence type="ECO:0007744" key="17">
    <source>
    </source>
</evidence>
<evidence type="ECO:0007829" key="18">
    <source>
        <dbReference type="PDB" id="5X6V"/>
    </source>
</evidence>
<keyword id="KW-0002">3D-structure</keyword>
<keyword id="KW-0007">Acetylation</keyword>
<keyword id="KW-0025">Alternative splicing</keyword>
<keyword id="KW-0963">Cytoplasm</keyword>
<keyword id="KW-0342">GTP-binding</keyword>
<keyword id="KW-0378">Hydrolase</keyword>
<keyword id="KW-0458">Lysosome</keyword>
<keyword id="KW-0472">Membrane</keyword>
<keyword id="KW-0547">Nucleotide-binding</keyword>
<keyword id="KW-0539">Nucleus</keyword>
<keyword id="KW-0597">Phosphoprotein</keyword>
<keyword id="KW-1185">Reference proteome</keyword>
<comment type="function">
    <text evidence="1">Guanine nucleotide-binding protein that plays a crucial role in the cellular response to amino acid availability through regulation of the mTORC1 signaling cascade. Forms heterodimeric Rag complexes with RagA/RRAGA or RagB/RRAGB and cycles between an inactive GTP-bound and an active GDP-bound form: RagC/RRAGC is in its active form when GDP-bound RagC/RRAGC forms a complex with GTP-bound RagA/RRAGA (or RagB/RRAGB) and in an inactive form when GTP-bound RagC/RRAGC heterodimerizes with GDP-bound RagA/RRAGA (or RagB/RRAGB). In its GDP-bound active form, promotes the recruitment of mTORC1 to the lysosomes and its subsequent activation by the GTPase RHEB. This is a crucial step in the activation of the MTOR signaling cascade by amino acids. Also plays a central role in the non-canonical mTORC1 complex, which acts independently of RHEB and specifically mediates phosphorylation of MiT/TFE factors TFEB and TFE3: GDP-bound RagC/RRAGC mediates recruitment of MiT/TFE factors TFEB and TFE3.</text>
</comment>
<comment type="catalytic activity">
    <reaction evidence="1">
        <text>GTP + H2O = GDP + phosphate + H(+)</text>
        <dbReference type="Rhea" id="RHEA:19669"/>
        <dbReference type="ChEBI" id="CHEBI:15377"/>
        <dbReference type="ChEBI" id="CHEBI:15378"/>
        <dbReference type="ChEBI" id="CHEBI:37565"/>
        <dbReference type="ChEBI" id="CHEBI:43474"/>
        <dbReference type="ChEBI" id="CHEBI:58189"/>
    </reaction>
    <physiologicalReaction direction="left-to-right" evidence="1">
        <dbReference type="Rhea" id="RHEA:19670"/>
    </physiologicalReaction>
</comment>
<comment type="activity regulation">
    <text evidence="1">The activation of RagC/RRAGC is mediated by a GTPase activating protein (GAP) (By similarity). In high-amino acid conditions, activated by GTPase activating protein FLCN that stimulates RRAGC GTPase activity to turn it into its active GDP-bound form (By similarity). In response to amino acid depletion, the GATOR1 complex inactivates RagC/RRAGC by securing the GTP-bound inactive form (By similarity).</text>
</comment>
<comment type="subunit">
    <text evidence="1 4 5 6">Forms a heterodimer with RRAGA, in a sequence-independent manner, and RRAGB (By similarity). Heterodimerization stabilizes proteins of the heterodimer (By similarity). The GDP-bound form of RRAGC (in complex with the GTP-bound form of RRAGA or RRAGB), interacts with RPTOR, thereby promoting recruitment of mTORC1 to the lysosomes (By similarity). Component of the lysosomal folliculin complex (LFC), composed of FLCN, FNIP1 (or FNIP2), RagA/RRAGA or RagB/RRAGB GDP-bound, RagC/RRAGC or RagD/RRAGD GTP-bound, and Ragulator (By similarity). Interacts with NOL8 (By similarity). Interacts with SH3BP4; the interaction with this negative regulator is most probably direct, preferentially occurs with the inactive GDP-bound form of RRAGB, is negatively regulated by amino acids and prevents interaction with RPTOR (By similarity). The Rag heterodimer interacts with SLC38A9; the probable amino acid sensor (By similarity). Interacts with SESN1, SESN2 and SESN3 (PubMed:25259925). Interacts with PIP4P1 (PubMed:29644770). The GDP-bound form interacts with TFEB (By similarity). The GDP-bound form interacts with TFE3 (PubMed:30595499).</text>
</comment>
<comment type="subcellular location">
    <subcellularLocation>
        <location evidence="1">Cytoplasm</location>
    </subcellularLocation>
    <subcellularLocation>
        <location evidence="1">Nucleus</location>
    </subcellularLocation>
    <subcellularLocation>
        <location evidence="1">Lysosome membrane</location>
    </subcellularLocation>
    <text evidence="1">Predominantly cytoplasmic. Recruited to the lysosome surface by the Ragulator complex. May shuttle between the cytoplasm and nucleus, depending on the bound nucleotide state of associated RRAGA.</text>
</comment>
<comment type="alternative products">
    <event type="alternative splicing"/>
    <isoform>
        <id>Q99K70-1</id>
        <name evidence="7">1</name>
        <sequence type="displayed"/>
    </isoform>
    <isoform>
        <id>Q99K70-2</id>
        <name evidence="8">2</name>
        <sequence type="described" ref="VSP_052076 VSP_052077"/>
    </isoform>
</comment>
<comment type="tissue specificity">
    <text evidence="3">Expressed most abundantly in kidney. Moderately expressed in brain, ovary, and testis, and detected at lower levels in heart, liver, and muscle. Not detected in lung, spleen, and small intestine. Widely expressed in tumor cells, with expression being specifically up-regulated in highly metastatic cells.</text>
</comment>
<comment type="similarity">
    <text evidence="9">Belongs to the GTR/RAG GTP-binding protein family.</text>
</comment>
<comment type="sequence caution" evidence="9">
    <conflict type="frameshift">
        <sequence resource="EMBL-CDS" id="BAA75671"/>
    </conflict>
</comment>
<sequence>MSLQYGAEETPLAGSYGAADSFPKDFGYGVEEEEEEAAAGGGGGAGAGGGCGPGGADSSKPRILLMGLRRSGKSSIQKVVFHKMSPNETLFLESTNKIYKDDISNSSFVNFQIWDFPGQMDFFDPTFDYEMIFRGTGALIYVIDAQDDYMEALTRLHITVSKAYKVNPDMNFEVFIHKVDGLSDDHKIETQRDIHQRANDDLADAGLEKLHLSFYLTSIYDHSIFEAFSKVVQKLIPQLPTLENLLNIFISNSGIEKAFLFDVVSKIYIATDSSPVDMQSYELCCDMIDVVIDVSCIYGLKEDGSGSAYDKESMAIIKLNNTTVLYLKEVTKFLALVCILREESFERKGLIDYNFHCFRKAIHEVFEVGVTSHRSCSHQTSAPSLKALAHNGTPRNAI</sequence>
<feature type="initiator methionine" description="Removed" evidence="1">
    <location>
        <position position="1"/>
    </location>
</feature>
<feature type="chain" id="PRO_0000239952" description="Ras-related GTP-binding protein C">
    <location>
        <begin position="2"/>
        <end position="398"/>
    </location>
</feature>
<feature type="region of interest" description="Disordered" evidence="2">
    <location>
        <begin position="1"/>
        <end position="56"/>
    </location>
</feature>
<feature type="compositionally biased region" description="Gly residues" evidence="2">
    <location>
        <begin position="39"/>
        <end position="55"/>
    </location>
</feature>
<feature type="binding site" evidence="1">
    <location>
        <position position="70"/>
    </location>
    <ligand>
        <name>GDP</name>
        <dbReference type="ChEBI" id="CHEBI:58189"/>
    </ligand>
</feature>
<feature type="binding site" evidence="1">
    <location>
        <position position="71"/>
    </location>
    <ligand>
        <name>GDP</name>
        <dbReference type="ChEBI" id="CHEBI:58189"/>
    </ligand>
</feature>
<feature type="binding site" evidence="1">
    <location>
        <position position="72"/>
    </location>
    <ligand>
        <name>GDP</name>
        <dbReference type="ChEBI" id="CHEBI:58189"/>
    </ligand>
</feature>
<feature type="binding site" evidence="1">
    <location>
        <position position="73"/>
    </location>
    <ligand>
        <name>GDP</name>
        <dbReference type="ChEBI" id="CHEBI:58189"/>
    </ligand>
</feature>
<feature type="binding site" evidence="1">
    <location>
        <position position="73"/>
    </location>
    <ligand>
        <name>GTP</name>
        <dbReference type="ChEBI" id="CHEBI:37565"/>
    </ligand>
</feature>
<feature type="binding site" evidence="1">
    <location>
        <position position="74"/>
    </location>
    <ligand>
        <name>GDP</name>
        <dbReference type="ChEBI" id="CHEBI:58189"/>
    </ligand>
</feature>
<feature type="binding site" evidence="1">
    <location>
        <position position="75"/>
    </location>
    <ligand>
        <name>GDP</name>
        <dbReference type="ChEBI" id="CHEBI:58189"/>
    </ligand>
</feature>
<feature type="binding site" evidence="1">
    <location>
        <position position="89"/>
    </location>
    <ligand>
        <name>GTP</name>
        <dbReference type="ChEBI" id="CHEBI:37565"/>
    </ligand>
</feature>
<feature type="binding site" evidence="1">
    <location>
        <position position="95"/>
    </location>
    <ligand>
        <name>GTP</name>
        <dbReference type="ChEBI" id="CHEBI:37565"/>
    </ligand>
</feature>
<feature type="binding site" evidence="1">
    <location>
        <position position="177"/>
    </location>
    <ligand>
        <name>GDP</name>
        <dbReference type="ChEBI" id="CHEBI:58189"/>
    </ligand>
</feature>
<feature type="binding site" evidence="1">
    <location>
        <position position="178"/>
    </location>
    <ligand>
        <name>GDP</name>
        <dbReference type="ChEBI" id="CHEBI:58189"/>
    </ligand>
</feature>
<feature type="binding site" evidence="1">
    <location>
        <position position="180"/>
    </location>
    <ligand>
        <name>GDP</name>
        <dbReference type="ChEBI" id="CHEBI:58189"/>
    </ligand>
</feature>
<feature type="binding site" evidence="1">
    <location>
        <position position="180"/>
    </location>
    <ligand>
        <name>GTP</name>
        <dbReference type="ChEBI" id="CHEBI:37565"/>
    </ligand>
</feature>
<feature type="binding site" evidence="1">
    <location>
        <position position="219"/>
    </location>
    <ligand>
        <name>GDP</name>
        <dbReference type="ChEBI" id="CHEBI:58189"/>
    </ligand>
</feature>
<feature type="modified residue" description="N-acetylserine" evidence="1">
    <location>
        <position position="2"/>
    </location>
</feature>
<feature type="modified residue" description="Phosphoserine" evidence="1">
    <location>
        <position position="2"/>
    </location>
</feature>
<feature type="modified residue" description="Phosphoserine" evidence="1">
    <location>
        <position position="15"/>
    </location>
</feature>
<feature type="modified residue" description="Phosphothreonine" evidence="17">
    <location>
        <position position="95"/>
    </location>
</feature>
<feature type="splice variant" id="VSP_052076" description="In isoform 2." evidence="7 8">
    <original>DDYMEALTRLHITVSKAYKVNPDMNFEVFIHKVDGL</original>
    <variation>VVRHDGVCTSLVAKRQRKGGKLFVSFVMCLKLLSFQ</variation>
    <location>
        <begin position="147"/>
        <end position="182"/>
    </location>
</feature>
<feature type="splice variant" id="VSP_052077" description="In isoform 2." evidence="7 8">
    <location>
        <begin position="183"/>
        <end position="398"/>
    </location>
</feature>
<feature type="sequence conflict" description="In Ref. 1; BAA75671." evidence="9" ref="1">
    <original>AD</original>
    <variation>R</variation>
    <location>
        <begin position="19"/>
        <end position="20"/>
    </location>
</feature>
<feature type="sequence conflict" description="In Ref. 1; BAA75671." evidence="9" ref="1">
    <original>G</original>
    <variation>R</variation>
    <location>
        <position position="55"/>
    </location>
</feature>
<feature type="sequence conflict" description="In Ref. 1; BAA75671." evidence="9" ref="1">
    <original>A</original>
    <variation>DA</variation>
    <location>
        <position position="56"/>
    </location>
</feature>
<feature type="sequence conflict" description="In Ref. 1; BAA75671." evidence="9" ref="1">
    <original>S</original>
    <variation>H</variation>
    <location>
        <position position="71"/>
    </location>
</feature>
<feature type="sequence conflict" description="In Ref. 2; BAE38923." evidence="9" ref="2">
    <original>CSHQTSAPSLKALAHNGTPRNAI</original>
    <variation>TSCR</variation>
    <location>
        <begin position="376"/>
        <end position="398"/>
    </location>
</feature>
<feature type="sequence conflict" description="In Ref. 1; BAA75671." evidence="9" ref="1">
    <original>K</original>
    <variation>R</variation>
    <location>
        <position position="386"/>
    </location>
</feature>
<feature type="helix" evidence="18">
    <location>
        <begin position="239"/>
        <end position="253"/>
    </location>
</feature>
<feature type="strand" evidence="18">
    <location>
        <begin position="256"/>
        <end position="262"/>
    </location>
</feature>
<feature type="turn" evidence="18">
    <location>
        <begin position="263"/>
        <end position="265"/>
    </location>
</feature>
<feature type="strand" evidence="18">
    <location>
        <begin position="268"/>
        <end position="271"/>
    </location>
</feature>
<feature type="helix" evidence="18">
    <location>
        <begin position="278"/>
        <end position="298"/>
    </location>
</feature>
<feature type="strand" evidence="18">
    <location>
        <begin position="302"/>
        <end position="304"/>
    </location>
</feature>
<feature type="strand" evidence="18">
    <location>
        <begin position="314"/>
        <end position="319"/>
    </location>
</feature>
<feature type="strand" evidence="18">
    <location>
        <begin position="322"/>
        <end position="341"/>
    </location>
</feature>
<feature type="helix" evidence="18">
    <location>
        <begin position="344"/>
        <end position="347"/>
    </location>
</feature>
<feature type="helix" evidence="18">
    <location>
        <begin position="348"/>
        <end position="368"/>
    </location>
</feature>
<reference evidence="9 12" key="1">
    <citation type="journal article" date="1999" name="Cancer Lett.">
        <title>A new member of the GTPase superfamily that is upregulated in highly metastatic cells.</title>
        <authorList>
            <person name="Nakaji T."/>
            <person name="Kataoka T.R."/>
            <person name="Watabe K."/>
            <person name="Nishiyama K."/>
            <person name="Nojima H."/>
            <person name="Shimada Y."/>
            <person name="Sato F."/>
            <person name="Matsushima H."/>
            <person name="Endo Y."/>
            <person name="Kuroda Y."/>
            <person name="Kitamura Y."/>
            <person name="Ito A."/>
            <person name="Maeda S."/>
        </authorList>
    </citation>
    <scope>NUCLEOTIDE SEQUENCE [MRNA] (ISOFORM 1)</scope>
    <scope>TISSUE SPECIFICITY</scope>
    <source>
        <strain evidence="12">C57BL/6J</strain>
    </source>
</reference>
<reference evidence="9 13" key="2">
    <citation type="journal article" date="2005" name="Science">
        <title>The transcriptional landscape of the mammalian genome.</title>
        <authorList>
            <person name="Carninci P."/>
            <person name="Kasukawa T."/>
            <person name="Katayama S."/>
            <person name="Gough J."/>
            <person name="Frith M.C."/>
            <person name="Maeda N."/>
            <person name="Oyama R."/>
            <person name="Ravasi T."/>
            <person name="Lenhard B."/>
            <person name="Wells C."/>
            <person name="Kodzius R."/>
            <person name="Shimokawa K."/>
            <person name="Bajic V.B."/>
            <person name="Brenner S.E."/>
            <person name="Batalov S."/>
            <person name="Forrest A.R."/>
            <person name="Zavolan M."/>
            <person name="Davis M.J."/>
            <person name="Wilming L.G."/>
            <person name="Aidinis V."/>
            <person name="Allen J.E."/>
            <person name="Ambesi-Impiombato A."/>
            <person name="Apweiler R."/>
            <person name="Aturaliya R.N."/>
            <person name="Bailey T.L."/>
            <person name="Bansal M."/>
            <person name="Baxter L."/>
            <person name="Beisel K.W."/>
            <person name="Bersano T."/>
            <person name="Bono H."/>
            <person name="Chalk A.M."/>
            <person name="Chiu K.P."/>
            <person name="Choudhary V."/>
            <person name="Christoffels A."/>
            <person name="Clutterbuck D.R."/>
            <person name="Crowe M.L."/>
            <person name="Dalla E."/>
            <person name="Dalrymple B.P."/>
            <person name="de Bono B."/>
            <person name="Della Gatta G."/>
            <person name="di Bernardo D."/>
            <person name="Down T."/>
            <person name="Engstrom P."/>
            <person name="Fagiolini M."/>
            <person name="Faulkner G."/>
            <person name="Fletcher C.F."/>
            <person name="Fukushima T."/>
            <person name="Furuno M."/>
            <person name="Futaki S."/>
            <person name="Gariboldi M."/>
            <person name="Georgii-Hemming P."/>
            <person name="Gingeras T.R."/>
            <person name="Gojobori T."/>
            <person name="Green R.E."/>
            <person name="Gustincich S."/>
            <person name="Harbers M."/>
            <person name="Hayashi Y."/>
            <person name="Hensch T.K."/>
            <person name="Hirokawa N."/>
            <person name="Hill D."/>
            <person name="Huminiecki L."/>
            <person name="Iacono M."/>
            <person name="Ikeo K."/>
            <person name="Iwama A."/>
            <person name="Ishikawa T."/>
            <person name="Jakt M."/>
            <person name="Kanapin A."/>
            <person name="Katoh M."/>
            <person name="Kawasawa Y."/>
            <person name="Kelso J."/>
            <person name="Kitamura H."/>
            <person name="Kitano H."/>
            <person name="Kollias G."/>
            <person name="Krishnan S.P."/>
            <person name="Kruger A."/>
            <person name="Kummerfeld S.K."/>
            <person name="Kurochkin I.V."/>
            <person name="Lareau L.F."/>
            <person name="Lazarevic D."/>
            <person name="Lipovich L."/>
            <person name="Liu J."/>
            <person name="Liuni S."/>
            <person name="McWilliam S."/>
            <person name="Madan Babu M."/>
            <person name="Madera M."/>
            <person name="Marchionni L."/>
            <person name="Matsuda H."/>
            <person name="Matsuzawa S."/>
            <person name="Miki H."/>
            <person name="Mignone F."/>
            <person name="Miyake S."/>
            <person name="Morris K."/>
            <person name="Mottagui-Tabar S."/>
            <person name="Mulder N."/>
            <person name="Nakano N."/>
            <person name="Nakauchi H."/>
            <person name="Ng P."/>
            <person name="Nilsson R."/>
            <person name="Nishiguchi S."/>
            <person name="Nishikawa S."/>
            <person name="Nori F."/>
            <person name="Ohara O."/>
            <person name="Okazaki Y."/>
            <person name="Orlando V."/>
            <person name="Pang K.C."/>
            <person name="Pavan W.J."/>
            <person name="Pavesi G."/>
            <person name="Pesole G."/>
            <person name="Petrovsky N."/>
            <person name="Piazza S."/>
            <person name="Reed J."/>
            <person name="Reid J.F."/>
            <person name="Ring B.Z."/>
            <person name="Ringwald M."/>
            <person name="Rost B."/>
            <person name="Ruan Y."/>
            <person name="Salzberg S.L."/>
            <person name="Sandelin A."/>
            <person name="Schneider C."/>
            <person name="Schoenbach C."/>
            <person name="Sekiguchi K."/>
            <person name="Semple C.A."/>
            <person name="Seno S."/>
            <person name="Sessa L."/>
            <person name="Sheng Y."/>
            <person name="Shibata Y."/>
            <person name="Shimada H."/>
            <person name="Shimada K."/>
            <person name="Silva D."/>
            <person name="Sinclair B."/>
            <person name="Sperling S."/>
            <person name="Stupka E."/>
            <person name="Sugiura K."/>
            <person name="Sultana R."/>
            <person name="Takenaka Y."/>
            <person name="Taki K."/>
            <person name="Tammoja K."/>
            <person name="Tan S.L."/>
            <person name="Tang S."/>
            <person name="Taylor M.S."/>
            <person name="Tegner J."/>
            <person name="Teichmann S.A."/>
            <person name="Ueda H.R."/>
            <person name="van Nimwegen E."/>
            <person name="Verardo R."/>
            <person name="Wei C.L."/>
            <person name="Yagi K."/>
            <person name="Yamanishi H."/>
            <person name="Zabarovsky E."/>
            <person name="Zhu S."/>
            <person name="Zimmer A."/>
            <person name="Hide W."/>
            <person name="Bult C."/>
            <person name="Grimmond S.M."/>
            <person name="Teasdale R.D."/>
            <person name="Liu E.T."/>
            <person name="Brusic V."/>
            <person name="Quackenbush J."/>
            <person name="Wahlestedt C."/>
            <person name="Mattick J.S."/>
            <person name="Hume D.A."/>
            <person name="Kai C."/>
            <person name="Sasaki D."/>
            <person name="Tomaru Y."/>
            <person name="Fukuda S."/>
            <person name="Kanamori-Katayama M."/>
            <person name="Suzuki M."/>
            <person name="Aoki J."/>
            <person name="Arakawa T."/>
            <person name="Iida J."/>
            <person name="Imamura K."/>
            <person name="Itoh M."/>
            <person name="Kato T."/>
            <person name="Kawaji H."/>
            <person name="Kawagashira N."/>
            <person name="Kawashima T."/>
            <person name="Kojima M."/>
            <person name="Kondo S."/>
            <person name="Konno H."/>
            <person name="Nakano K."/>
            <person name="Ninomiya N."/>
            <person name="Nishio T."/>
            <person name="Okada M."/>
            <person name="Plessy C."/>
            <person name="Shibata K."/>
            <person name="Shiraki T."/>
            <person name="Suzuki S."/>
            <person name="Tagami M."/>
            <person name="Waki K."/>
            <person name="Watahiki A."/>
            <person name="Okamura-Oho Y."/>
            <person name="Suzuki H."/>
            <person name="Kawai J."/>
            <person name="Hayashizaki Y."/>
        </authorList>
    </citation>
    <scope>NUCLEOTIDE SEQUENCE [LARGE SCALE MRNA] (ISOFORM 1)</scope>
    <source>
        <strain evidence="13">C57BL/6J</strain>
        <tissue evidence="14">Embryo</tissue>
    </source>
</reference>
<reference key="3">
    <citation type="journal article" date="2009" name="PLoS Biol.">
        <title>Lineage-specific biology revealed by a finished genome assembly of the mouse.</title>
        <authorList>
            <person name="Church D.M."/>
            <person name="Goodstadt L."/>
            <person name="Hillier L.W."/>
            <person name="Zody M.C."/>
            <person name="Goldstein S."/>
            <person name="She X."/>
            <person name="Bult C.J."/>
            <person name="Agarwala R."/>
            <person name="Cherry J.L."/>
            <person name="DiCuccio M."/>
            <person name="Hlavina W."/>
            <person name="Kapustin Y."/>
            <person name="Meric P."/>
            <person name="Maglott D."/>
            <person name="Birtle Z."/>
            <person name="Marques A.C."/>
            <person name="Graves T."/>
            <person name="Zhou S."/>
            <person name="Teague B."/>
            <person name="Potamousis K."/>
            <person name="Churas C."/>
            <person name="Place M."/>
            <person name="Herschleb J."/>
            <person name="Runnheim R."/>
            <person name="Forrest D."/>
            <person name="Amos-Landgraf J."/>
            <person name="Schwartz D.C."/>
            <person name="Cheng Z."/>
            <person name="Lindblad-Toh K."/>
            <person name="Eichler E.E."/>
            <person name="Ponting C.P."/>
        </authorList>
    </citation>
    <scope>NUCLEOTIDE SEQUENCE [LARGE SCALE GENOMIC DNA]</scope>
    <source>
        <strain>C57BL/6J</strain>
    </source>
</reference>
<reference evidence="9 10" key="4">
    <citation type="journal article" date="2004" name="Genome Res.">
        <title>The status, quality, and expansion of the NIH full-length cDNA project: the Mammalian Gene Collection (MGC).</title>
        <authorList>
            <consortium name="The MGC Project Team"/>
        </authorList>
    </citation>
    <scope>NUCLEOTIDE SEQUENCE [LARGE SCALE MRNA] (ISOFORMS 1 AND 2)</scope>
    <source>
        <strain>C57BL/6J</strain>
        <strain evidence="10">Czech II</strain>
        <strain evidence="11">FVB/N</strain>
        <tissue evidence="11">Liver</tissue>
        <tissue evidence="10">Mammary gland</tissue>
        <tissue>Retina</tissue>
    </source>
</reference>
<reference key="5">
    <citation type="journal article" date="2009" name="Immunity">
        <title>The phagosomal proteome in interferon-gamma-activated macrophages.</title>
        <authorList>
            <person name="Trost M."/>
            <person name="English L."/>
            <person name="Lemieux S."/>
            <person name="Courcelles M."/>
            <person name="Desjardins M."/>
            <person name="Thibault P."/>
        </authorList>
    </citation>
    <scope>PHOSPHORYLATION [LARGE SCALE ANALYSIS] AT THR-95</scope>
    <scope>IDENTIFICATION BY MASS SPECTROMETRY [LARGE SCALE ANALYSIS]</scope>
</reference>
<reference key="6">
    <citation type="journal article" date="2010" name="Cell">
        <title>A tissue-specific atlas of mouse protein phosphorylation and expression.</title>
        <authorList>
            <person name="Huttlin E.L."/>
            <person name="Jedrychowski M.P."/>
            <person name="Elias J.E."/>
            <person name="Goswami T."/>
            <person name="Rad R."/>
            <person name="Beausoleil S.A."/>
            <person name="Villen J."/>
            <person name="Haas W."/>
            <person name="Sowa M.E."/>
            <person name="Gygi S.P."/>
        </authorList>
    </citation>
    <scope>IDENTIFICATION BY MASS SPECTROMETRY [LARGE SCALE ANALYSIS]</scope>
    <source>
        <tissue>Brain</tissue>
        <tissue>Brown adipose tissue</tissue>
        <tissue>Heart</tissue>
        <tissue>Kidney</tissue>
        <tissue>Lung</tissue>
        <tissue>Pancreas</tissue>
        <tissue>Spleen</tissue>
        <tissue>Testis</tissue>
    </source>
</reference>
<reference key="7">
    <citation type="journal article" date="2014" name="Cell">
        <title>Sestrins function as guanine nucleotide dissociation inhibitors for Rag GTPases to control mTORC1 signaling.</title>
        <authorList>
            <person name="Peng M."/>
            <person name="Yin N."/>
            <person name="Li M.O."/>
        </authorList>
    </citation>
    <scope>INTERACTION WITH SESN1; SESN2 AND SESN3</scope>
</reference>
<reference key="8">
    <citation type="journal article" date="2018" name="Genes Cells">
        <title>TMEM55B contributes to lysosomal homeostasis and amino acid-induced mTORC1 activation.</title>
        <authorList>
            <person name="Hashimoto Y."/>
            <person name="Shirane M."/>
            <person name="Nakayama K.I."/>
        </authorList>
    </citation>
    <scope>INTERACTION WITH PIP4P1</scope>
</reference>
<reference key="9">
    <citation type="journal article" date="2019" name="Cell Stem Cell">
        <title>Lysosomal signaling licenses embryonic stem cell differentiation via inactivation of Tfe3.</title>
        <authorList>
            <person name="Villegas F."/>
            <person name="Lehalle D."/>
            <person name="Mayer D."/>
            <person name="Rittirsch M."/>
            <person name="Stadler M.B."/>
            <person name="Zinner M."/>
            <person name="Olivieri D."/>
            <person name="Vabres P."/>
            <person name="Duplomb-Jego L."/>
            <person name="De Bont E.S.J.M."/>
            <person name="Duffourd Y."/>
            <person name="Duijkers F."/>
            <person name="Avila M."/>
            <person name="Genevieve D."/>
            <person name="Houcinat N."/>
            <person name="Jouan T."/>
            <person name="Kuentz P."/>
            <person name="Lichtenbelt K.D."/>
            <person name="Thauvin-Robinet C."/>
            <person name="St-Onge J."/>
            <person name="Thevenon J."/>
            <person name="van Gassen K.L.I."/>
            <person name="van Haelst M."/>
            <person name="van Koningsbruggen S."/>
            <person name="Hess D."/>
            <person name="Smallwood S.A."/>
            <person name="Riviere J.B."/>
            <person name="Faivre L."/>
            <person name="Betschinger J."/>
        </authorList>
    </citation>
    <scope>INTERACTION WITH TFE3</scope>
</reference>
<reference evidence="16" key="10">
    <citation type="journal article" date="2017" name="Nat. Commun.">
        <title>Structural basis for the assembly of the Ragulator-Rag GTPase complex.</title>
        <authorList>
            <person name="Yonehara R."/>
            <person name="Nada S."/>
            <person name="Nakai T."/>
            <person name="Nakai M."/>
            <person name="Kitamura A."/>
            <person name="Ogawa A."/>
            <person name="Nakatsumi H."/>
            <person name="Nakayama K.I."/>
            <person name="Li S."/>
            <person name="Standley D.M."/>
            <person name="Yamashita E."/>
            <person name="Nakagawa A."/>
            <person name="Okada M."/>
        </authorList>
    </citation>
    <scope>X-RAY CRYSTALLOGRAPHY (2.02 ANGSTROMS) OF 238-375 IN COMPLEX WITH RRAGA; LAMTOR1; LAMTOR2; LAMTOR3; LAMTOR4 AND LAMTOR5</scope>
</reference>
<organism>
    <name type="scientific">Mus musculus</name>
    <name type="common">Mouse</name>
    <dbReference type="NCBI Taxonomy" id="10090"/>
    <lineage>
        <taxon>Eukaryota</taxon>
        <taxon>Metazoa</taxon>
        <taxon>Chordata</taxon>
        <taxon>Craniata</taxon>
        <taxon>Vertebrata</taxon>
        <taxon>Euteleostomi</taxon>
        <taxon>Mammalia</taxon>
        <taxon>Eutheria</taxon>
        <taxon>Euarchontoglires</taxon>
        <taxon>Glires</taxon>
        <taxon>Rodentia</taxon>
        <taxon>Myomorpha</taxon>
        <taxon>Muroidea</taxon>
        <taxon>Muridae</taxon>
        <taxon>Murinae</taxon>
        <taxon>Mus</taxon>
        <taxon>Mus</taxon>
    </lineage>
</organism>
<protein>
    <recommendedName>
        <fullName>Ras-related GTP-binding protein C</fullName>
        <shortName>Rag C</shortName>
        <shortName>RagC</shortName>
        <ecNumber evidence="1">3.6.5.-</ecNumber>
    </recommendedName>
    <alternativeName>
        <fullName>GTPase-interacting protein 2</fullName>
    </alternativeName>
    <alternativeName>
        <fullName>TIB929</fullName>
    </alternativeName>
</protein>